<evidence type="ECO:0000255" key="1">
    <source>
        <dbReference type="HAMAP-Rule" id="MF_00054"/>
    </source>
</evidence>
<accession>Q1MPS9</accession>
<feature type="chain" id="PRO_0000263465" description="Elongation factor G">
    <location>
        <begin position="1"/>
        <end position="691"/>
    </location>
</feature>
<feature type="domain" description="tr-type G">
    <location>
        <begin position="8"/>
        <end position="283"/>
    </location>
</feature>
<feature type="binding site" evidence="1">
    <location>
        <begin position="17"/>
        <end position="24"/>
    </location>
    <ligand>
        <name>GTP</name>
        <dbReference type="ChEBI" id="CHEBI:37565"/>
    </ligand>
</feature>
<feature type="binding site" evidence="1">
    <location>
        <begin position="81"/>
        <end position="85"/>
    </location>
    <ligand>
        <name>GTP</name>
        <dbReference type="ChEBI" id="CHEBI:37565"/>
    </ligand>
</feature>
<feature type="binding site" evidence="1">
    <location>
        <begin position="135"/>
        <end position="138"/>
    </location>
    <ligand>
        <name>GTP</name>
        <dbReference type="ChEBI" id="CHEBI:37565"/>
    </ligand>
</feature>
<dbReference type="EMBL" id="AM180252">
    <property type="protein sequence ID" value="CAJ54998.1"/>
    <property type="molecule type" value="Genomic_DNA"/>
</dbReference>
<dbReference type="RefSeq" id="WP_011527027.1">
    <property type="nucleotide sequence ID" value="NC_008011.1"/>
</dbReference>
<dbReference type="SMR" id="Q1MPS9"/>
<dbReference type="STRING" id="363253.LI0944"/>
<dbReference type="KEGG" id="lip:LI0944"/>
<dbReference type="eggNOG" id="COG0480">
    <property type="taxonomic scope" value="Bacteria"/>
</dbReference>
<dbReference type="HOGENOM" id="CLU_002794_4_1_7"/>
<dbReference type="OrthoDB" id="9801472at2"/>
<dbReference type="Proteomes" id="UP000002430">
    <property type="component" value="Chromosome"/>
</dbReference>
<dbReference type="GO" id="GO:0005737">
    <property type="term" value="C:cytoplasm"/>
    <property type="evidence" value="ECO:0007669"/>
    <property type="project" value="UniProtKB-SubCell"/>
</dbReference>
<dbReference type="GO" id="GO:0005525">
    <property type="term" value="F:GTP binding"/>
    <property type="evidence" value="ECO:0007669"/>
    <property type="project" value="UniProtKB-UniRule"/>
</dbReference>
<dbReference type="GO" id="GO:0003924">
    <property type="term" value="F:GTPase activity"/>
    <property type="evidence" value="ECO:0007669"/>
    <property type="project" value="InterPro"/>
</dbReference>
<dbReference type="GO" id="GO:0003746">
    <property type="term" value="F:translation elongation factor activity"/>
    <property type="evidence" value="ECO:0007669"/>
    <property type="project" value="UniProtKB-UniRule"/>
</dbReference>
<dbReference type="GO" id="GO:0032790">
    <property type="term" value="P:ribosome disassembly"/>
    <property type="evidence" value="ECO:0007669"/>
    <property type="project" value="TreeGrafter"/>
</dbReference>
<dbReference type="CDD" id="cd01886">
    <property type="entry name" value="EF-G"/>
    <property type="match status" value="1"/>
</dbReference>
<dbReference type="CDD" id="cd16262">
    <property type="entry name" value="EFG_III"/>
    <property type="match status" value="1"/>
</dbReference>
<dbReference type="CDD" id="cd01434">
    <property type="entry name" value="EFG_mtEFG1_IV"/>
    <property type="match status" value="1"/>
</dbReference>
<dbReference type="CDD" id="cd03713">
    <property type="entry name" value="EFG_mtEFG_C"/>
    <property type="match status" value="1"/>
</dbReference>
<dbReference type="CDD" id="cd04088">
    <property type="entry name" value="EFG_mtEFG_II"/>
    <property type="match status" value="1"/>
</dbReference>
<dbReference type="FunFam" id="2.40.30.10:FF:000006">
    <property type="entry name" value="Elongation factor G"/>
    <property type="match status" value="1"/>
</dbReference>
<dbReference type="FunFam" id="3.30.230.10:FF:000003">
    <property type="entry name" value="Elongation factor G"/>
    <property type="match status" value="1"/>
</dbReference>
<dbReference type="FunFam" id="3.30.70.240:FF:000001">
    <property type="entry name" value="Elongation factor G"/>
    <property type="match status" value="1"/>
</dbReference>
<dbReference type="FunFam" id="3.30.70.870:FF:000001">
    <property type="entry name" value="Elongation factor G"/>
    <property type="match status" value="1"/>
</dbReference>
<dbReference type="FunFam" id="3.40.50.300:FF:000029">
    <property type="entry name" value="Elongation factor G"/>
    <property type="match status" value="1"/>
</dbReference>
<dbReference type="Gene3D" id="3.30.230.10">
    <property type="match status" value="1"/>
</dbReference>
<dbReference type="Gene3D" id="3.30.70.240">
    <property type="match status" value="1"/>
</dbReference>
<dbReference type="Gene3D" id="3.30.70.870">
    <property type="entry name" value="Elongation Factor G (Translational Gtpase), domain 3"/>
    <property type="match status" value="1"/>
</dbReference>
<dbReference type="Gene3D" id="3.40.50.300">
    <property type="entry name" value="P-loop containing nucleotide triphosphate hydrolases"/>
    <property type="match status" value="1"/>
</dbReference>
<dbReference type="Gene3D" id="2.40.30.10">
    <property type="entry name" value="Translation factors"/>
    <property type="match status" value="1"/>
</dbReference>
<dbReference type="HAMAP" id="MF_00054_B">
    <property type="entry name" value="EF_G_EF_2_B"/>
    <property type="match status" value="1"/>
</dbReference>
<dbReference type="InterPro" id="IPR053905">
    <property type="entry name" value="EF-G-like_DII"/>
</dbReference>
<dbReference type="InterPro" id="IPR041095">
    <property type="entry name" value="EFG_II"/>
</dbReference>
<dbReference type="InterPro" id="IPR009022">
    <property type="entry name" value="EFG_III"/>
</dbReference>
<dbReference type="InterPro" id="IPR035647">
    <property type="entry name" value="EFG_III/V"/>
</dbReference>
<dbReference type="InterPro" id="IPR047872">
    <property type="entry name" value="EFG_IV"/>
</dbReference>
<dbReference type="InterPro" id="IPR035649">
    <property type="entry name" value="EFG_V"/>
</dbReference>
<dbReference type="InterPro" id="IPR000640">
    <property type="entry name" value="EFG_V-like"/>
</dbReference>
<dbReference type="InterPro" id="IPR031157">
    <property type="entry name" value="G_TR_CS"/>
</dbReference>
<dbReference type="InterPro" id="IPR027417">
    <property type="entry name" value="P-loop_NTPase"/>
</dbReference>
<dbReference type="InterPro" id="IPR020568">
    <property type="entry name" value="Ribosomal_Su5_D2-typ_SF"/>
</dbReference>
<dbReference type="InterPro" id="IPR014721">
    <property type="entry name" value="Ribsml_uS5_D2-typ_fold_subgr"/>
</dbReference>
<dbReference type="InterPro" id="IPR005225">
    <property type="entry name" value="Small_GTP-bd"/>
</dbReference>
<dbReference type="InterPro" id="IPR000795">
    <property type="entry name" value="T_Tr_GTP-bd_dom"/>
</dbReference>
<dbReference type="InterPro" id="IPR009000">
    <property type="entry name" value="Transl_B-barrel_sf"/>
</dbReference>
<dbReference type="InterPro" id="IPR004540">
    <property type="entry name" value="Transl_elong_EFG/EF2"/>
</dbReference>
<dbReference type="InterPro" id="IPR005517">
    <property type="entry name" value="Transl_elong_EFG/EF2_IV"/>
</dbReference>
<dbReference type="NCBIfam" id="TIGR00484">
    <property type="entry name" value="EF-G"/>
    <property type="match status" value="1"/>
</dbReference>
<dbReference type="NCBIfam" id="NF009379">
    <property type="entry name" value="PRK12740.1-3"/>
    <property type="match status" value="1"/>
</dbReference>
<dbReference type="NCBIfam" id="NF009381">
    <property type="entry name" value="PRK12740.1-5"/>
    <property type="match status" value="1"/>
</dbReference>
<dbReference type="NCBIfam" id="TIGR00231">
    <property type="entry name" value="small_GTP"/>
    <property type="match status" value="1"/>
</dbReference>
<dbReference type="PANTHER" id="PTHR43261:SF1">
    <property type="entry name" value="RIBOSOME-RELEASING FACTOR 2, MITOCHONDRIAL"/>
    <property type="match status" value="1"/>
</dbReference>
<dbReference type="PANTHER" id="PTHR43261">
    <property type="entry name" value="TRANSLATION ELONGATION FACTOR G-RELATED"/>
    <property type="match status" value="1"/>
</dbReference>
<dbReference type="Pfam" id="PF22042">
    <property type="entry name" value="EF-G_D2"/>
    <property type="match status" value="1"/>
</dbReference>
<dbReference type="Pfam" id="PF00679">
    <property type="entry name" value="EFG_C"/>
    <property type="match status" value="1"/>
</dbReference>
<dbReference type="Pfam" id="PF14492">
    <property type="entry name" value="EFG_III"/>
    <property type="match status" value="1"/>
</dbReference>
<dbReference type="Pfam" id="PF03764">
    <property type="entry name" value="EFG_IV"/>
    <property type="match status" value="1"/>
</dbReference>
<dbReference type="Pfam" id="PF00009">
    <property type="entry name" value="GTP_EFTU"/>
    <property type="match status" value="1"/>
</dbReference>
<dbReference type="PRINTS" id="PR00315">
    <property type="entry name" value="ELONGATNFCT"/>
</dbReference>
<dbReference type="SMART" id="SM00838">
    <property type="entry name" value="EFG_C"/>
    <property type="match status" value="1"/>
</dbReference>
<dbReference type="SMART" id="SM00889">
    <property type="entry name" value="EFG_IV"/>
    <property type="match status" value="1"/>
</dbReference>
<dbReference type="SUPFAM" id="SSF54980">
    <property type="entry name" value="EF-G C-terminal domain-like"/>
    <property type="match status" value="2"/>
</dbReference>
<dbReference type="SUPFAM" id="SSF52540">
    <property type="entry name" value="P-loop containing nucleoside triphosphate hydrolases"/>
    <property type="match status" value="1"/>
</dbReference>
<dbReference type="SUPFAM" id="SSF54211">
    <property type="entry name" value="Ribosomal protein S5 domain 2-like"/>
    <property type="match status" value="1"/>
</dbReference>
<dbReference type="SUPFAM" id="SSF50447">
    <property type="entry name" value="Translation proteins"/>
    <property type="match status" value="1"/>
</dbReference>
<dbReference type="PROSITE" id="PS00301">
    <property type="entry name" value="G_TR_1"/>
    <property type="match status" value="1"/>
</dbReference>
<dbReference type="PROSITE" id="PS51722">
    <property type="entry name" value="G_TR_2"/>
    <property type="match status" value="1"/>
</dbReference>
<keyword id="KW-0963">Cytoplasm</keyword>
<keyword id="KW-0251">Elongation factor</keyword>
<keyword id="KW-0342">GTP-binding</keyword>
<keyword id="KW-0547">Nucleotide-binding</keyword>
<keyword id="KW-0648">Protein biosynthesis</keyword>
<keyword id="KW-1185">Reference proteome</keyword>
<comment type="function">
    <text evidence="1">Catalyzes the GTP-dependent ribosomal translocation step during translation elongation. During this step, the ribosome changes from the pre-translocational (PRE) to the post-translocational (POST) state as the newly formed A-site-bound peptidyl-tRNA and P-site-bound deacylated tRNA move to the P and E sites, respectively. Catalyzes the coordinated movement of the two tRNA molecules, the mRNA and conformational changes in the ribosome.</text>
</comment>
<comment type="subcellular location">
    <subcellularLocation>
        <location evidence="1">Cytoplasm</location>
    </subcellularLocation>
</comment>
<comment type="similarity">
    <text evidence="1">Belongs to the TRAFAC class translation factor GTPase superfamily. Classic translation factor GTPase family. EF-G/EF-2 subfamily.</text>
</comment>
<name>EFG_LAWIP</name>
<sequence length="691" mass="76401">MSRTVPIEKQRNIGIMAHIDAGKTTTTERILYYTGVSHKIGETHDGASTMDWMEQEQERGITITSAATTCFWDGYRINIIDTPGHVDFTIEVERSLRVLDGAVAVFDAVAGVEPQSETVWRQANRYGVPRVCFVNKMDRIGANFFRCVDMIQERLRAKPVCLQLPIGAEDNFEGIIDLIHGVSLKFDKETKGLEVERGPIPPELMELYQEKRLEMMEAAAEEDEVLLAKYLEGTELTAEEIIACIRKATIEQRLVPVLCGSAFRNIGVQPLLDAVVQYLPSPLDIPQMVGHNPNSPEEEIVCHCSDKEPLAGLVFKLASDPFIGHLSFFRIYSGFVESGMTVLNTTTEKRERIGRLLKMHANKREDIKWAGAGDIVALVGLKQASTGDTLCDEKRPVILESLDIPEPVIEVAIEPKTKTDRDALSTGLNKLAKEDPSFRVKGNEETGQTLIAGMGELHLEIIVDRLLREFNVNANVGKPQVAYRETITKPGKSDTKYAKQSGGRGQYGHCVIEIEPNPGNGYTFINSISGGVIPKEYIPAIDKGIQDALKSGILAGFPVVDIKVNLVFGSYHEVDSSEQAFYVAGSMAIKDAMHKSNPILLEPIMDVEVVTPDDYLGDVMGDLNGRRGKVQSMEARSGAQAIRAQVPLSEMFGYATELRSRTQGRATFSMQFDHYERVPAAIAEEVIKSRS</sequence>
<organism>
    <name type="scientific">Lawsonia intracellularis (strain PHE/MN1-00)</name>
    <dbReference type="NCBI Taxonomy" id="363253"/>
    <lineage>
        <taxon>Bacteria</taxon>
        <taxon>Pseudomonadati</taxon>
        <taxon>Thermodesulfobacteriota</taxon>
        <taxon>Desulfovibrionia</taxon>
        <taxon>Desulfovibrionales</taxon>
        <taxon>Desulfovibrionaceae</taxon>
        <taxon>Lawsonia</taxon>
    </lineage>
</organism>
<protein>
    <recommendedName>
        <fullName evidence="1">Elongation factor G</fullName>
        <shortName evidence="1">EF-G</shortName>
    </recommendedName>
</protein>
<reference key="1">
    <citation type="submission" date="2005-11" db="EMBL/GenBank/DDBJ databases">
        <title>The complete genome sequence of Lawsonia intracellularis: the causative agent of proliferative enteropathy.</title>
        <authorList>
            <person name="Kaur K."/>
            <person name="Zhang Q."/>
            <person name="Beckler D."/>
            <person name="Munir S."/>
            <person name="Li L."/>
            <person name="Kinsley K."/>
            <person name="Herron L."/>
            <person name="Peterson A."/>
            <person name="May B."/>
            <person name="Singh S."/>
            <person name="Gebhart C."/>
            <person name="Kapur V."/>
        </authorList>
    </citation>
    <scope>NUCLEOTIDE SEQUENCE [LARGE SCALE GENOMIC DNA]</scope>
    <source>
        <strain>PHE/MN1-00</strain>
    </source>
</reference>
<gene>
    <name evidence="1" type="primary">fusA</name>
    <name type="ordered locus">LI0944</name>
</gene>
<proteinExistence type="inferred from homology"/>